<comment type="function">
    <text evidence="1">The RuvA-RuvB-RuvC complex processes Holliday junction (HJ) DNA during genetic recombination and DNA repair, while the RuvA-RuvB complex plays an important role in the rescue of blocked DNA replication forks via replication fork reversal (RFR). RuvA specifically binds to HJ cruciform DNA, conferring on it an open structure. The RuvB hexamer acts as an ATP-dependent pump, pulling dsDNA into and through the RuvAB complex. HJ branch migration allows RuvC to scan DNA until it finds its consensus sequence, where it cleaves and resolves the cruciform DNA.</text>
</comment>
<comment type="subunit">
    <text evidence="1">Homotetramer. Forms an RuvA(8)-RuvB(12)-Holliday junction (HJ) complex. HJ DNA is sandwiched between 2 RuvA tetramers; dsDNA enters through RuvA and exits via RuvB. An RuvB hexamer assembles on each DNA strand where it exits the tetramer. Each RuvB hexamer is contacted by two RuvA subunits (via domain III) on 2 adjacent RuvB subunits; this complex drives branch migration. In the full resolvosome a probable DNA-RuvA(4)-RuvB(12)-RuvC(2) complex forms which resolves the HJ.</text>
</comment>
<comment type="subcellular location">
    <subcellularLocation>
        <location evidence="1">Cytoplasm</location>
    </subcellularLocation>
</comment>
<comment type="domain">
    <text evidence="1">Has three domains with a flexible linker between the domains II and III and assumes an 'L' shape. Domain III is highly mobile and contacts RuvB.</text>
</comment>
<comment type="similarity">
    <text evidence="1">Belongs to the RuvA family.</text>
</comment>
<sequence length="225" mass="26080">MISWINGELVETWQTNQKFFVLINCQGLGYEIQILESFFLKLKTNQISNKKITLWIKHIKKEDSDLLFGFTSKDQKFFFIEILSVRGVGSQIGMSILNKFSISEIIKAIKTQDKKLICSIPGIGQKMSDRLILELKSKFKSKIQIEEEKGQEEFEITNPEIYKLMEDLQLTLQSLNYKNKEIKTILPFLIKELGLPTKKEKNLSFENLLNLAMNHLDQGNSNLAR</sequence>
<proteinExistence type="inferred from homology"/>
<gene>
    <name evidence="1" type="primary">ruvA</name>
    <name type="ordered locus">P9215_09481</name>
</gene>
<dbReference type="EMBL" id="CP000825">
    <property type="protein sequence ID" value="ABV50563.1"/>
    <property type="molecule type" value="Genomic_DNA"/>
</dbReference>
<dbReference type="RefSeq" id="WP_012007654.1">
    <property type="nucleotide sequence ID" value="NC_009840.1"/>
</dbReference>
<dbReference type="SMR" id="A8G4N2"/>
<dbReference type="STRING" id="93060.P9215_09481"/>
<dbReference type="KEGG" id="pmh:P9215_09481"/>
<dbReference type="eggNOG" id="COG0632">
    <property type="taxonomic scope" value="Bacteria"/>
</dbReference>
<dbReference type="HOGENOM" id="CLU_087936_0_0_3"/>
<dbReference type="OrthoDB" id="5293449at2"/>
<dbReference type="Proteomes" id="UP000002014">
    <property type="component" value="Chromosome"/>
</dbReference>
<dbReference type="GO" id="GO:0005737">
    <property type="term" value="C:cytoplasm"/>
    <property type="evidence" value="ECO:0007669"/>
    <property type="project" value="UniProtKB-SubCell"/>
</dbReference>
<dbReference type="GO" id="GO:0048476">
    <property type="term" value="C:Holliday junction resolvase complex"/>
    <property type="evidence" value="ECO:0007669"/>
    <property type="project" value="UniProtKB-UniRule"/>
</dbReference>
<dbReference type="GO" id="GO:0005524">
    <property type="term" value="F:ATP binding"/>
    <property type="evidence" value="ECO:0007669"/>
    <property type="project" value="InterPro"/>
</dbReference>
<dbReference type="GO" id="GO:0000400">
    <property type="term" value="F:four-way junction DNA binding"/>
    <property type="evidence" value="ECO:0007669"/>
    <property type="project" value="UniProtKB-UniRule"/>
</dbReference>
<dbReference type="GO" id="GO:0009378">
    <property type="term" value="F:four-way junction helicase activity"/>
    <property type="evidence" value="ECO:0007669"/>
    <property type="project" value="InterPro"/>
</dbReference>
<dbReference type="GO" id="GO:0006310">
    <property type="term" value="P:DNA recombination"/>
    <property type="evidence" value="ECO:0007669"/>
    <property type="project" value="UniProtKB-UniRule"/>
</dbReference>
<dbReference type="GO" id="GO:0006281">
    <property type="term" value="P:DNA repair"/>
    <property type="evidence" value="ECO:0007669"/>
    <property type="project" value="UniProtKB-UniRule"/>
</dbReference>
<dbReference type="Gene3D" id="1.10.150.20">
    <property type="entry name" value="5' to 3' exonuclease, C-terminal subdomain"/>
    <property type="match status" value="1"/>
</dbReference>
<dbReference type="Gene3D" id="2.40.50.140">
    <property type="entry name" value="Nucleic acid-binding proteins"/>
    <property type="match status" value="1"/>
</dbReference>
<dbReference type="HAMAP" id="MF_00031">
    <property type="entry name" value="DNA_HJ_migration_RuvA"/>
    <property type="match status" value="1"/>
</dbReference>
<dbReference type="InterPro" id="IPR013849">
    <property type="entry name" value="DNA_helicase_Holl-junc_RuvA_I"/>
</dbReference>
<dbReference type="InterPro" id="IPR012340">
    <property type="entry name" value="NA-bd_OB-fold"/>
</dbReference>
<dbReference type="InterPro" id="IPR000085">
    <property type="entry name" value="RuvA"/>
</dbReference>
<dbReference type="InterPro" id="IPR010994">
    <property type="entry name" value="RuvA_2-like"/>
</dbReference>
<dbReference type="NCBIfam" id="TIGR00084">
    <property type="entry name" value="ruvA"/>
    <property type="match status" value="1"/>
</dbReference>
<dbReference type="Pfam" id="PF14520">
    <property type="entry name" value="HHH_5"/>
    <property type="match status" value="1"/>
</dbReference>
<dbReference type="Pfam" id="PF01330">
    <property type="entry name" value="RuvA_N"/>
    <property type="match status" value="1"/>
</dbReference>
<dbReference type="SUPFAM" id="SSF50249">
    <property type="entry name" value="Nucleic acid-binding proteins"/>
    <property type="match status" value="1"/>
</dbReference>
<dbReference type="SUPFAM" id="SSF47781">
    <property type="entry name" value="RuvA domain 2-like"/>
    <property type="match status" value="1"/>
</dbReference>
<name>RUVA_PROM2</name>
<reference key="1">
    <citation type="journal article" date="2007" name="PLoS Genet.">
        <title>Patterns and implications of gene gain and loss in the evolution of Prochlorococcus.</title>
        <authorList>
            <person name="Kettler G.C."/>
            <person name="Martiny A.C."/>
            <person name="Huang K."/>
            <person name="Zucker J."/>
            <person name="Coleman M.L."/>
            <person name="Rodrigue S."/>
            <person name="Chen F."/>
            <person name="Lapidus A."/>
            <person name="Ferriera S."/>
            <person name="Johnson J."/>
            <person name="Steglich C."/>
            <person name="Church G.M."/>
            <person name="Richardson P."/>
            <person name="Chisholm S.W."/>
        </authorList>
    </citation>
    <scope>NUCLEOTIDE SEQUENCE [LARGE SCALE GENOMIC DNA]</scope>
    <source>
        <strain>MIT 9215</strain>
    </source>
</reference>
<keyword id="KW-0963">Cytoplasm</keyword>
<keyword id="KW-0227">DNA damage</keyword>
<keyword id="KW-0233">DNA recombination</keyword>
<keyword id="KW-0234">DNA repair</keyword>
<keyword id="KW-0238">DNA-binding</keyword>
<accession>A8G4N2</accession>
<organism>
    <name type="scientific">Prochlorococcus marinus (strain MIT 9215)</name>
    <dbReference type="NCBI Taxonomy" id="93060"/>
    <lineage>
        <taxon>Bacteria</taxon>
        <taxon>Bacillati</taxon>
        <taxon>Cyanobacteriota</taxon>
        <taxon>Cyanophyceae</taxon>
        <taxon>Synechococcales</taxon>
        <taxon>Prochlorococcaceae</taxon>
        <taxon>Prochlorococcus</taxon>
    </lineage>
</organism>
<feature type="chain" id="PRO_1000057240" description="Holliday junction branch migration complex subunit RuvA">
    <location>
        <begin position="1"/>
        <end position="225"/>
    </location>
</feature>
<feature type="region of interest" description="Domain I" evidence="1">
    <location>
        <begin position="1"/>
        <end position="71"/>
    </location>
</feature>
<feature type="region of interest" description="Domain II" evidence="1">
    <location>
        <begin position="72"/>
        <end position="150"/>
    </location>
</feature>
<feature type="region of interest" description="Flexible linker" evidence="1">
    <location>
        <begin position="151"/>
        <end position="161"/>
    </location>
</feature>
<feature type="region of interest" description="Domain III" evidence="1">
    <location>
        <begin position="161"/>
        <end position="225"/>
    </location>
</feature>
<evidence type="ECO:0000255" key="1">
    <source>
        <dbReference type="HAMAP-Rule" id="MF_00031"/>
    </source>
</evidence>
<protein>
    <recommendedName>
        <fullName evidence="1">Holliday junction branch migration complex subunit RuvA</fullName>
    </recommendedName>
</protein>